<protein>
    <recommendedName>
        <fullName evidence="1">Aminomethyltransferase</fullName>
        <ecNumber evidence="1">2.1.2.10</ecNumber>
    </recommendedName>
    <alternativeName>
        <fullName evidence="1">Glycine cleavage system T protein</fullName>
    </alternativeName>
</protein>
<gene>
    <name evidence="1" type="primary">gcvT</name>
    <name type="ordered locus">plu3598</name>
</gene>
<proteinExistence type="inferred from homology"/>
<reference key="1">
    <citation type="journal article" date="2003" name="Nat. Biotechnol.">
        <title>The genome sequence of the entomopathogenic bacterium Photorhabdus luminescens.</title>
        <authorList>
            <person name="Duchaud E."/>
            <person name="Rusniok C."/>
            <person name="Frangeul L."/>
            <person name="Buchrieser C."/>
            <person name="Givaudan A."/>
            <person name="Taourit S."/>
            <person name="Bocs S."/>
            <person name="Boursaux-Eude C."/>
            <person name="Chandler M."/>
            <person name="Charles J.-F."/>
            <person name="Dassa E."/>
            <person name="Derose R."/>
            <person name="Derzelle S."/>
            <person name="Freyssinet G."/>
            <person name="Gaudriault S."/>
            <person name="Medigue C."/>
            <person name="Lanois A."/>
            <person name="Powell K."/>
            <person name="Siguier P."/>
            <person name="Vincent R."/>
            <person name="Wingate V."/>
            <person name="Zouine M."/>
            <person name="Glaser P."/>
            <person name="Boemare N."/>
            <person name="Danchin A."/>
            <person name="Kunst F."/>
        </authorList>
    </citation>
    <scope>NUCLEOTIDE SEQUENCE [LARGE SCALE GENOMIC DNA]</scope>
    <source>
        <strain>DSM 15139 / CIP 105565 / TT01</strain>
    </source>
</reference>
<feature type="chain" id="PRO_0000122580" description="Aminomethyltransferase">
    <location>
        <begin position="1"/>
        <end position="364"/>
    </location>
</feature>
<accession>Q7N197</accession>
<dbReference type="EC" id="2.1.2.10" evidence="1"/>
<dbReference type="EMBL" id="BX571871">
    <property type="protein sequence ID" value="CAE15971.1"/>
    <property type="molecule type" value="Genomic_DNA"/>
</dbReference>
<dbReference type="RefSeq" id="WP_011147765.1">
    <property type="nucleotide sequence ID" value="NC_005126.1"/>
</dbReference>
<dbReference type="SMR" id="Q7N197"/>
<dbReference type="STRING" id="243265.plu3598"/>
<dbReference type="GeneID" id="48849844"/>
<dbReference type="KEGG" id="plu:plu3598"/>
<dbReference type="eggNOG" id="COG0404">
    <property type="taxonomic scope" value="Bacteria"/>
</dbReference>
<dbReference type="HOGENOM" id="CLU_007884_10_2_6"/>
<dbReference type="OrthoDB" id="9774591at2"/>
<dbReference type="Proteomes" id="UP000002514">
    <property type="component" value="Chromosome"/>
</dbReference>
<dbReference type="GO" id="GO:0005829">
    <property type="term" value="C:cytosol"/>
    <property type="evidence" value="ECO:0007669"/>
    <property type="project" value="TreeGrafter"/>
</dbReference>
<dbReference type="GO" id="GO:0005960">
    <property type="term" value="C:glycine cleavage complex"/>
    <property type="evidence" value="ECO:0007669"/>
    <property type="project" value="InterPro"/>
</dbReference>
<dbReference type="GO" id="GO:0004047">
    <property type="term" value="F:aminomethyltransferase activity"/>
    <property type="evidence" value="ECO:0007669"/>
    <property type="project" value="UniProtKB-UniRule"/>
</dbReference>
<dbReference type="GO" id="GO:0008483">
    <property type="term" value="F:transaminase activity"/>
    <property type="evidence" value="ECO:0007669"/>
    <property type="project" value="UniProtKB-KW"/>
</dbReference>
<dbReference type="GO" id="GO:0019464">
    <property type="term" value="P:glycine decarboxylation via glycine cleavage system"/>
    <property type="evidence" value="ECO:0007669"/>
    <property type="project" value="UniProtKB-UniRule"/>
</dbReference>
<dbReference type="FunFam" id="2.40.30.110:FF:000001">
    <property type="entry name" value="Aminomethyltransferase"/>
    <property type="match status" value="1"/>
</dbReference>
<dbReference type="FunFam" id="3.30.70.1400:FF:000001">
    <property type="entry name" value="Aminomethyltransferase"/>
    <property type="match status" value="1"/>
</dbReference>
<dbReference type="FunFam" id="4.10.1250.10:FF:000001">
    <property type="entry name" value="Aminomethyltransferase"/>
    <property type="match status" value="1"/>
</dbReference>
<dbReference type="Gene3D" id="2.40.30.110">
    <property type="entry name" value="Aminomethyltransferase beta-barrel domains"/>
    <property type="match status" value="1"/>
</dbReference>
<dbReference type="Gene3D" id="3.30.70.1400">
    <property type="entry name" value="Aminomethyltransferase beta-barrel domains"/>
    <property type="match status" value="1"/>
</dbReference>
<dbReference type="Gene3D" id="4.10.1250.10">
    <property type="entry name" value="Aminomethyltransferase fragment"/>
    <property type="match status" value="1"/>
</dbReference>
<dbReference type="Gene3D" id="3.30.1360.120">
    <property type="entry name" value="Probable tRNA modification gtpase trme, domain 1"/>
    <property type="match status" value="1"/>
</dbReference>
<dbReference type="HAMAP" id="MF_00259">
    <property type="entry name" value="GcvT"/>
    <property type="match status" value="1"/>
</dbReference>
<dbReference type="InterPro" id="IPR006223">
    <property type="entry name" value="GCS_T"/>
</dbReference>
<dbReference type="InterPro" id="IPR022903">
    <property type="entry name" value="GCS_T_bac"/>
</dbReference>
<dbReference type="InterPro" id="IPR013977">
    <property type="entry name" value="GCST_C"/>
</dbReference>
<dbReference type="InterPro" id="IPR006222">
    <property type="entry name" value="GCV_T_N"/>
</dbReference>
<dbReference type="InterPro" id="IPR028896">
    <property type="entry name" value="GcvT/YgfZ/DmdA"/>
</dbReference>
<dbReference type="InterPro" id="IPR029043">
    <property type="entry name" value="GcvT/YgfZ_C"/>
</dbReference>
<dbReference type="InterPro" id="IPR027266">
    <property type="entry name" value="TrmE/GcvT_dom1"/>
</dbReference>
<dbReference type="NCBIfam" id="TIGR00528">
    <property type="entry name" value="gcvT"/>
    <property type="match status" value="1"/>
</dbReference>
<dbReference type="NCBIfam" id="NF001567">
    <property type="entry name" value="PRK00389.1"/>
    <property type="match status" value="1"/>
</dbReference>
<dbReference type="PANTHER" id="PTHR43757">
    <property type="entry name" value="AMINOMETHYLTRANSFERASE"/>
    <property type="match status" value="1"/>
</dbReference>
<dbReference type="PANTHER" id="PTHR43757:SF2">
    <property type="entry name" value="AMINOMETHYLTRANSFERASE, MITOCHONDRIAL"/>
    <property type="match status" value="1"/>
</dbReference>
<dbReference type="Pfam" id="PF01571">
    <property type="entry name" value="GCV_T"/>
    <property type="match status" value="1"/>
</dbReference>
<dbReference type="Pfam" id="PF08669">
    <property type="entry name" value="GCV_T_C"/>
    <property type="match status" value="1"/>
</dbReference>
<dbReference type="PIRSF" id="PIRSF006487">
    <property type="entry name" value="GcvT"/>
    <property type="match status" value="1"/>
</dbReference>
<dbReference type="SUPFAM" id="SSF101790">
    <property type="entry name" value="Aminomethyltransferase beta-barrel domain"/>
    <property type="match status" value="1"/>
</dbReference>
<dbReference type="SUPFAM" id="SSF103025">
    <property type="entry name" value="Folate-binding domain"/>
    <property type="match status" value="1"/>
</dbReference>
<organism>
    <name type="scientific">Photorhabdus laumondii subsp. laumondii (strain DSM 15139 / CIP 105565 / TT01)</name>
    <name type="common">Photorhabdus luminescens subsp. laumondii</name>
    <dbReference type="NCBI Taxonomy" id="243265"/>
    <lineage>
        <taxon>Bacteria</taxon>
        <taxon>Pseudomonadati</taxon>
        <taxon>Pseudomonadota</taxon>
        <taxon>Gammaproteobacteria</taxon>
        <taxon>Enterobacterales</taxon>
        <taxon>Morganellaceae</taxon>
        <taxon>Photorhabdus</taxon>
    </lineage>
</organism>
<sequence length="364" mass="40084">MAKQTPLYDQHLACGARMVDFHGWMMPLHYGSQMDEHHIVRTHAGMFDVSHMTIVDLHGTGCRDFLRYLLANDIAKLTEKGKALYTGMLNASGGVIDDLIVYYLSNDFYRLVVNSATREKDLAWINEHVANYPVDIQVRDDLALIAVQGPDAQAKVESLLNDEQKQTIAGMKPFFGVQAGDLFIATTGYTGEAGYEVALPKEQAADFWQKLLSVGVKPAGLGARDTLRLEAGMNLYGQEMDETISPLVANMGWTIAWKPEDRQFIGREALEKQREEGTEQLVGLVMREKGVLRGGLAVSFTDEMGTLHSGVITSGTFSPTLGFSIALARVPQGIGEQAVVQIRNREMPVQVVKPSFVRAGKPLV</sequence>
<evidence type="ECO:0000255" key="1">
    <source>
        <dbReference type="HAMAP-Rule" id="MF_00259"/>
    </source>
</evidence>
<comment type="function">
    <text evidence="1">The glycine cleavage system catalyzes the degradation of glycine.</text>
</comment>
<comment type="catalytic activity">
    <reaction evidence="1">
        <text>N(6)-[(R)-S(8)-aminomethyldihydrolipoyl]-L-lysyl-[protein] + (6S)-5,6,7,8-tetrahydrofolate = N(6)-[(R)-dihydrolipoyl]-L-lysyl-[protein] + (6R)-5,10-methylene-5,6,7,8-tetrahydrofolate + NH4(+)</text>
        <dbReference type="Rhea" id="RHEA:16945"/>
        <dbReference type="Rhea" id="RHEA-COMP:10475"/>
        <dbReference type="Rhea" id="RHEA-COMP:10492"/>
        <dbReference type="ChEBI" id="CHEBI:15636"/>
        <dbReference type="ChEBI" id="CHEBI:28938"/>
        <dbReference type="ChEBI" id="CHEBI:57453"/>
        <dbReference type="ChEBI" id="CHEBI:83100"/>
        <dbReference type="ChEBI" id="CHEBI:83143"/>
        <dbReference type="EC" id="2.1.2.10"/>
    </reaction>
</comment>
<comment type="subunit">
    <text evidence="1">The glycine cleavage system is composed of four proteins: P, T, L and H.</text>
</comment>
<comment type="similarity">
    <text evidence="1">Belongs to the GcvT family.</text>
</comment>
<keyword id="KW-0032">Aminotransferase</keyword>
<keyword id="KW-1185">Reference proteome</keyword>
<keyword id="KW-0808">Transferase</keyword>
<name>GCST_PHOLL</name>